<sequence length="208" mass="23601">MAEEEEPKPPPLRRKSSANYRGYAVEPHAKRQSKISASRKLQLKTLLLQRAKRDLEREEQERAGEKQRHLGELCPPPELDGLGVAQLQELCRELHARIGRVDEERYDMGTRVSKNMAEMEELRLRVAGGRFVRPALRRVRLSADAMMAALLGSKHRVGTDLRAGLRQVRKDEAEKESREVGDWRKNVDALSGMEGRKKKFEAPGGGQS</sequence>
<organism>
    <name type="scientific">Coturnix japonica</name>
    <name type="common">Japanese quail</name>
    <name type="synonym">Coturnix coturnix japonica</name>
    <dbReference type="NCBI Taxonomy" id="93934"/>
    <lineage>
        <taxon>Eukaryota</taxon>
        <taxon>Metazoa</taxon>
        <taxon>Chordata</taxon>
        <taxon>Craniata</taxon>
        <taxon>Vertebrata</taxon>
        <taxon>Euteleostomi</taxon>
        <taxon>Archelosauria</taxon>
        <taxon>Archosauria</taxon>
        <taxon>Dinosauria</taxon>
        <taxon>Saurischia</taxon>
        <taxon>Theropoda</taxon>
        <taxon>Coelurosauria</taxon>
        <taxon>Aves</taxon>
        <taxon>Neognathae</taxon>
        <taxon>Galloanserae</taxon>
        <taxon>Galliformes</taxon>
        <taxon>Phasianidae</taxon>
        <taxon>Perdicinae</taxon>
        <taxon>Coturnix</taxon>
    </lineage>
</organism>
<gene>
    <name type="primary">TNNI3</name>
</gene>
<dbReference type="EMBL" id="M73702">
    <property type="protein sequence ID" value="AAA49513.1"/>
    <property type="molecule type" value="mRNA"/>
</dbReference>
<dbReference type="SMR" id="P27672"/>
<dbReference type="Proteomes" id="UP000694412">
    <property type="component" value="Unplaced"/>
</dbReference>
<dbReference type="GO" id="GO:0005861">
    <property type="term" value="C:troponin complex"/>
    <property type="evidence" value="ECO:0007669"/>
    <property type="project" value="InterPro"/>
</dbReference>
<dbReference type="GO" id="GO:0003779">
    <property type="term" value="F:actin binding"/>
    <property type="evidence" value="ECO:0007669"/>
    <property type="project" value="UniProtKB-KW"/>
</dbReference>
<dbReference type="GO" id="GO:0060048">
    <property type="term" value="P:cardiac muscle contraction"/>
    <property type="evidence" value="ECO:0007669"/>
    <property type="project" value="TreeGrafter"/>
</dbReference>
<dbReference type="GO" id="GO:0003009">
    <property type="term" value="P:skeletal muscle contraction"/>
    <property type="evidence" value="ECO:0007669"/>
    <property type="project" value="TreeGrafter"/>
</dbReference>
<dbReference type="Gene3D" id="1.20.5.350">
    <property type="match status" value="1"/>
</dbReference>
<dbReference type="Gene3D" id="6.10.250.180">
    <property type="match status" value="1"/>
</dbReference>
<dbReference type="InterPro" id="IPR001978">
    <property type="entry name" value="Troponin"/>
</dbReference>
<dbReference type="InterPro" id="IPR021666">
    <property type="entry name" value="Troponin-I_N"/>
</dbReference>
<dbReference type="InterPro" id="IPR050875">
    <property type="entry name" value="Troponin_I"/>
</dbReference>
<dbReference type="InterPro" id="IPR038077">
    <property type="entry name" value="Troponin_sf"/>
</dbReference>
<dbReference type="PANTHER" id="PTHR13738">
    <property type="entry name" value="TROPONIN I"/>
    <property type="match status" value="1"/>
</dbReference>
<dbReference type="PANTHER" id="PTHR13738:SF2">
    <property type="entry name" value="TROPONIN I, CARDIAC MUSCLE"/>
    <property type="match status" value="1"/>
</dbReference>
<dbReference type="Pfam" id="PF00992">
    <property type="entry name" value="Troponin"/>
    <property type="match status" value="1"/>
</dbReference>
<dbReference type="Pfam" id="PF11636">
    <property type="entry name" value="Troponin-I_N"/>
    <property type="match status" value="1"/>
</dbReference>
<dbReference type="SUPFAM" id="SSF90250">
    <property type="entry name" value="Troponin coil-coiled subunits"/>
    <property type="match status" value="1"/>
</dbReference>
<comment type="function">
    <text>Troponin I is the inhibitory subunit of troponin, the thin filament regulatory complex which confers calcium-sensitivity to striated muscle actomyosin ATPase activity.</text>
</comment>
<comment type="subunit">
    <text>Binds to actin and tropomyosin.</text>
</comment>
<comment type="similarity">
    <text evidence="3">Belongs to the troponin I family.</text>
</comment>
<name>TNNI3_COTJA</name>
<evidence type="ECO:0000250" key="1"/>
<evidence type="ECO:0000256" key="2">
    <source>
        <dbReference type="SAM" id="MobiDB-lite"/>
    </source>
</evidence>
<evidence type="ECO:0000305" key="3"/>
<reference key="1">
    <citation type="journal article" date="1991" name="J. Biol. Chem.">
        <title>Structure and developmental expression of troponin I isoforms. cDNA clone analysis of avian cardiac troponin I mRNA.</title>
        <authorList>
            <person name="Hastings K.E."/>
            <person name="Koppe R.I."/>
            <person name="Marmur E."/>
            <person name="Bader D."/>
            <person name="Shimada Y."/>
            <person name="Toyota N."/>
        </authorList>
    </citation>
    <scope>NUCLEOTIDE SEQUENCE [MRNA]</scope>
</reference>
<protein>
    <recommendedName>
        <fullName>Troponin I, cardiac muscle</fullName>
    </recommendedName>
    <alternativeName>
        <fullName>Cardiac troponin I</fullName>
    </alternativeName>
</protein>
<keyword id="KW-0007">Acetylation</keyword>
<keyword id="KW-0009">Actin-binding</keyword>
<keyword id="KW-0514">Muscle protein</keyword>
<keyword id="KW-1185">Reference proteome</keyword>
<proteinExistence type="evidence at transcript level"/>
<feature type="initiator methionine" description="Removed" evidence="1">
    <location>
        <position position="1"/>
    </location>
</feature>
<feature type="chain" id="PRO_0000186157" description="Troponin I, cardiac muscle">
    <location>
        <begin position="2"/>
        <end position="208"/>
    </location>
</feature>
<feature type="region of interest" description="Disordered" evidence="2">
    <location>
        <begin position="1"/>
        <end position="37"/>
    </location>
</feature>
<feature type="region of interest" description="Involved in binding TNC">
    <location>
        <begin position="28"/>
        <end position="73"/>
    </location>
</feature>
<feature type="region of interest" description="Disordered" evidence="2">
    <location>
        <begin position="54"/>
        <end position="74"/>
    </location>
</feature>
<feature type="region of interest" description="Disordered" evidence="2">
    <location>
        <begin position="168"/>
        <end position="208"/>
    </location>
</feature>
<feature type="compositionally biased region" description="Basic and acidic residues" evidence="2">
    <location>
        <begin position="54"/>
        <end position="71"/>
    </location>
</feature>
<feature type="compositionally biased region" description="Basic and acidic residues" evidence="2">
    <location>
        <begin position="168"/>
        <end position="187"/>
    </location>
</feature>
<feature type="modified residue" description="N-acetylalanine" evidence="1">
    <location>
        <position position="2"/>
    </location>
</feature>
<accession>P27672</accession>